<accession>A1AHF5</accession>
<gene>
    <name evidence="1" type="primary">hldD</name>
    <name type="ordered locus">Ecok1_36010</name>
    <name type="ORF">APECO1_2837</name>
</gene>
<comment type="function">
    <text evidence="1">Catalyzes the interconversion between ADP-D-glycero-beta-D-manno-heptose and ADP-L-glycero-beta-D-manno-heptose via an epimerization at carbon 6 of the heptose.</text>
</comment>
<comment type="catalytic activity">
    <reaction evidence="1">
        <text>ADP-D-glycero-beta-D-manno-heptose = ADP-L-glycero-beta-D-manno-heptose</text>
        <dbReference type="Rhea" id="RHEA:17577"/>
        <dbReference type="ChEBI" id="CHEBI:59967"/>
        <dbReference type="ChEBI" id="CHEBI:61506"/>
        <dbReference type="EC" id="5.1.3.20"/>
    </reaction>
</comment>
<comment type="cofactor">
    <cofactor evidence="1">
        <name>NADP(+)</name>
        <dbReference type="ChEBI" id="CHEBI:58349"/>
    </cofactor>
    <text evidence="1">Binds 1 NADP(+) per subunit.</text>
</comment>
<comment type="pathway">
    <text evidence="1">Nucleotide-sugar biosynthesis; ADP-L-glycero-beta-D-manno-heptose biosynthesis; ADP-L-glycero-beta-D-manno-heptose from D-glycero-beta-D-manno-heptose 7-phosphate: step 4/4.</text>
</comment>
<comment type="subunit">
    <text evidence="1">Homopentamer.</text>
</comment>
<comment type="domain">
    <text evidence="1">Contains a large N-terminal NADP-binding domain, and a smaller C-terminal substrate-binding domain.</text>
</comment>
<comment type="similarity">
    <text evidence="1">Belongs to the NAD(P)-dependent epimerase/dehydratase family. HldD subfamily.</text>
</comment>
<proteinExistence type="inferred from homology"/>
<sequence>MIIVTGGAGFIGSNIVKALNDKGITDILVVDNLKDGTKFVNLVDLDIADYMDKEDFLIQIMAGEEFGDVEAIFHEGACSSTTEWDGKYMMDNNYQYSKELLHYCLEREIPFLYASSAATYGGRTSDFIESREYEKPLNVYGYSKFLFDEYVRQILPEANSQIVGFRYFNVYGPREGHKGSMASVAFHLNTQLNNGESPKLFEGSENFKRDFVYVGDVADVNLWFLENGVSGIFNLGTGRAESFQAVADATLAYHKKGQIEYIPFPDKLKGRYQAFTQADLTNLRAAGYDKPFKTVAEGVTEYMAWLNRDA</sequence>
<keyword id="KW-0007">Acetylation</keyword>
<keyword id="KW-0119">Carbohydrate metabolism</keyword>
<keyword id="KW-0413">Isomerase</keyword>
<keyword id="KW-0521">NADP</keyword>
<keyword id="KW-1185">Reference proteome</keyword>
<evidence type="ECO:0000255" key="1">
    <source>
        <dbReference type="HAMAP-Rule" id="MF_01601"/>
    </source>
</evidence>
<name>HLDD_ECOK1</name>
<protein>
    <recommendedName>
        <fullName evidence="1">ADP-L-glycero-D-manno-heptose-6-epimerase</fullName>
        <ecNumber evidence="1">5.1.3.20</ecNumber>
    </recommendedName>
    <alternativeName>
        <fullName evidence="1">ADP-L-glycero-beta-D-manno-heptose-6-epimerase</fullName>
        <shortName evidence="1">ADP-glyceromanno-heptose 6-epimerase</shortName>
        <shortName evidence="1">ADP-hep 6-epimerase</shortName>
        <shortName evidence="1">AGME</shortName>
    </alternativeName>
</protein>
<reference key="1">
    <citation type="journal article" date="2007" name="J. Bacteriol.">
        <title>The genome sequence of avian pathogenic Escherichia coli strain O1:K1:H7 shares strong similarities with human extraintestinal pathogenic E. coli genomes.</title>
        <authorList>
            <person name="Johnson T.J."/>
            <person name="Kariyawasam S."/>
            <person name="Wannemuehler Y."/>
            <person name="Mangiamele P."/>
            <person name="Johnson S.J."/>
            <person name="Doetkott C."/>
            <person name="Skyberg J.A."/>
            <person name="Lynne A.M."/>
            <person name="Johnson J.R."/>
            <person name="Nolan L.K."/>
        </authorList>
    </citation>
    <scope>NUCLEOTIDE SEQUENCE [LARGE SCALE GENOMIC DNA]</scope>
</reference>
<feature type="chain" id="PRO_1000069355" description="ADP-L-glycero-D-manno-heptose-6-epimerase">
    <location>
        <begin position="1"/>
        <end position="310"/>
    </location>
</feature>
<feature type="active site" description="Proton acceptor" evidence="1">
    <location>
        <position position="140"/>
    </location>
</feature>
<feature type="active site" description="Proton acceptor" evidence="1">
    <location>
        <position position="178"/>
    </location>
</feature>
<feature type="binding site" evidence="1">
    <location>
        <begin position="10"/>
        <end position="11"/>
    </location>
    <ligand>
        <name>NADP(+)</name>
        <dbReference type="ChEBI" id="CHEBI:58349"/>
    </ligand>
</feature>
<feature type="binding site" evidence="1">
    <location>
        <begin position="31"/>
        <end position="32"/>
    </location>
    <ligand>
        <name>NADP(+)</name>
        <dbReference type="ChEBI" id="CHEBI:58349"/>
    </ligand>
</feature>
<feature type="binding site" evidence="1">
    <location>
        <position position="38"/>
    </location>
    <ligand>
        <name>NADP(+)</name>
        <dbReference type="ChEBI" id="CHEBI:58349"/>
    </ligand>
</feature>
<feature type="binding site" evidence="1">
    <location>
        <position position="53"/>
    </location>
    <ligand>
        <name>NADP(+)</name>
        <dbReference type="ChEBI" id="CHEBI:58349"/>
    </ligand>
</feature>
<feature type="binding site" evidence="1">
    <location>
        <begin position="75"/>
        <end position="79"/>
    </location>
    <ligand>
        <name>NADP(+)</name>
        <dbReference type="ChEBI" id="CHEBI:58349"/>
    </ligand>
</feature>
<feature type="binding site" evidence="1">
    <location>
        <position position="92"/>
    </location>
    <ligand>
        <name>NADP(+)</name>
        <dbReference type="ChEBI" id="CHEBI:58349"/>
    </ligand>
</feature>
<feature type="binding site" evidence="1">
    <location>
        <position position="144"/>
    </location>
    <ligand>
        <name>NADP(+)</name>
        <dbReference type="ChEBI" id="CHEBI:58349"/>
    </ligand>
</feature>
<feature type="binding site" evidence="1">
    <location>
        <position position="169"/>
    </location>
    <ligand>
        <name>substrate</name>
    </ligand>
</feature>
<feature type="binding site" evidence="1">
    <location>
        <position position="170"/>
    </location>
    <ligand>
        <name>NADP(+)</name>
        <dbReference type="ChEBI" id="CHEBI:58349"/>
    </ligand>
</feature>
<feature type="binding site" evidence="1">
    <location>
        <position position="178"/>
    </location>
    <ligand>
        <name>NADP(+)</name>
        <dbReference type="ChEBI" id="CHEBI:58349"/>
    </ligand>
</feature>
<feature type="binding site" evidence="1">
    <location>
        <position position="180"/>
    </location>
    <ligand>
        <name>substrate</name>
    </ligand>
</feature>
<feature type="binding site" evidence="1">
    <location>
        <position position="187"/>
    </location>
    <ligand>
        <name>substrate</name>
    </ligand>
</feature>
<feature type="binding site" evidence="1">
    <location>
        <begin position="201"/>
        <end position="204"/>
    </location>
    <ligand>
        <name>substrate</name>
    </ligand>
</feature>
<feature type="binding site" evidence="1">
    <location>
        <position position="209"/>
    </location>
    <ligand>
        <name>substrate</name>
    </ligand>
</feature>
<feature type="binding site" evidence="1">
    <location>
        <position position="272"/>
    </location>
    <ligand>
        <name>substrate</name>
    </ligand>
</feature>
<feature type="modified residue" description="N6-acetyllysine" evidence="1">
    <location>
        <position position="267"/>
    </location>
</feature>
<organism>
    <name type="scientific">Escherichia coli O1:K1 / APEC</name>
    <dbReference type="NCBI Taxonomy" id="405955"/>
    <lineage>
        <taxon>Bacteria</taxon>
        <taxon>Pseudomonadati</taxon>
        <taxon>Pseudomonadota</taxon>
        <taxon>Gammaproteobacteria</taxon>
        <taxon>Enterobacterales</taxon>
        <taxon>Enterobacteriaceae</taxon>
        <taxon>Escherichia</taxon>
    </lineage>
</organism>
<dbReference type="EC" id="5.1.3.20" evidence="1"/>
<dbReference type="EMBL" id="CP000468">
    <property type="protein sequence ID" value="ABJ03095.1"/>
    <property type="molecule type" value="Genomic_DNA"/>
</dbReference>
<dbReference type="SMR" id="A1AHF5"/>
<dbReference type="KEGG" id="ecv:APECO1_2837"/>
<dbReference type="HOGENOM" id="CLU_007383_1_3_6"/>
<dbReference type="UniPathway" id="UPA00356">
    <property type="reaction ID" value="UER00440"/>
</dbReference>
<dbReference type="Proteomes" id="UP000008216">
    <property type="component" value="Chromosome"/>
</dbReference>
<dbReference type="GO" id="GO:0008712">
    <property type="term" value="F:ADP-glyceromanno-heptose 6-epimerase activity"/>
    <property type="evidence" value="ECO:0007669"/>
    <property type="project" value="UniProtKB-UniRule"/>
</dbReference>
<dbReference type="GO" id="GO:0050661">
    <property type="term" value="F:NADP binding"/>
    <property type="evidence" value="ECO:0007669"/>
    <property type="project" value="InterPro"/>
</dbReference>
<dbReference type="GO" id="GO:0097171">
    <property type="term" value="P:ADP-L-glycero-beta-D-manno-heptose biosynthetic process"/>
    <property type="evidence" value="ECO:0007669"/>
    <property type="project" value="UniProtKB-UniPathway"/>
</dbReference>
<dbReference type="GO" id="GO:0005975">
    <property type="term" value="P:carbohydrate metabolic process"/>
    <property type="evidence" value="ECO:0007669"/>
    <property type="project" value="UniProtKB-UniRule"/>
</dbReference>
<dbReference type="CDD" id="cd05248">
    <property type="entry name" value="ADP_GME_SDR_e"/>
    <property type="match status" value="1"/>
</dbReference>
<dbReference type="Gene3D" id="3.40.50.720">
    <property type="entry name" value="NAD(P)-binding Rossmann-like Domain"/>
    <property type="match status" value="1"/>
</dbReference>
<dbReference type="Gene3D" id="3.90.25.10">
    <property type="entry name" value="UDP-galactose 4-epimerase, domain 1"/>
    <property type="match status" value="1"/>
</dbReference>
<dbReference type="HAMAP" id="MF_01601">
    <property type="entry name" value="Heptose_epimerase"/>
    <property type="match status" value="1"/>
</dbReference>
<dbReference type="InterPro" id="IPR001509">
    <property type="entry name" value="Epimerase_deHydtase"/>
</dbReference>
<dbReference type="InterPro" id="IPR011912">
    <property type="entry name" value="Heptose_epim"/>
</dbReference>
<dbReference type="InterPro" id="IPR036291">
    <property type="entry name" value="NAD(P)-bd_dom_sf"/>
</dbReference>
<dbReference type="NCBIfam" id="TIGR02197">
    <property type="entry name" value="heptose_epim"/>
    <property type="match status" value="1"/>
</dbReference>
<dbReference type="NCBIfam" id="NF008360">
    <property type="entry name" value="PRK11150.1"/>
    <property type="match status" value="1"/>
</dbReference>
<dbReference type="PANTHER" id="PTHR43103:SF3">
    <property type="entry name" value="ADP-L-GLYCERO-D-MANNO-HEPTOSE-6-EPIMERASE"/>
    <property type="match status" value="1"/>
</dbReference>
<dbReference type="PANTHER" id="PTHR43103">
    <property type="entry name" value="NUCLEOSIDE-DIPHOSPHATE-SUGAR EPIMERASE"/>
    <property type="match status" value="1"/>
</dbReference>
<dbReference type="Pfam" id="PF01370">
    <property type="entry name" value="Epimerase"/>
    <property type="match status" value="1"/>
</dbReference>
<dbReference type="SUPFAM" id="SSF51735">
    <property type="entry name" value="NAD(P)-binding Rossmann-fold domains"/>
    <property type="match status" value="1"/>
</dbReference>